<gene>
    <name type="primary">FHL5</name>
    <name type="synonym">ACT</name>
</gene>
<name>FHL5_HUMAN</name>
<comment type="function">
    <text evidence="4">May be involved in the regulation of spermatogenesis. Stimulates CREM transcriptional activity in a phosphorylation-independent manner.</text>
</comment>
<comment type="subunit">
    <text evidence="1">Interacts with CREM (via the third LIM domain). Interacts (via second LIM domain) with SPAG8.</text>
</comment>
<comment type="interaction">
    <interactant intactId="EBI-750641">
        <id>Q5TD97</id>
    </interactant>
    <interactant intactId="EBI-11096309">
        <id>Q9NYB9-2</id>
        <label>ABI2</label>
    </interactant>
    <organismsDiffer>false</organismsDiffer>
    <experiments>3</experiments>
</comment>
<comment type="interaction">
    <interactant intactId="EBI-750641">
        <id>Q5TD97</id>
    </interactant>
    <interactant intactId="EBI-12006944">
        <id>O43184-4</id>
        <label>ADAM12</label>
    </interactant>
    <organismsDiffer>false</organismsDiffer>
    <experiments>3</experiments>
</comment>
<comment type="interaction">
    <interactant intactId="EBI-750641">
        <id>Q5TD97</id>
    </interactant>
    <interactant intactId="EBI-9075891">
        <id>Q6ZMM2</id>
        <label>ADAMTSL5</label>
    </interactant>
    <organismsDiffer>false</organismsDiffer>
    <experiments>3</experiments>
</comment>
<comment type="interaction">
    <interactant intactId="EBI-750641">
        <id>Q5TD97</id>
    </interactant>
    <interactant intactId="EBI-727098">
        <id>P21549</id>
        <label>AGXT</label>
    </interactant>
    <organismsDiffer>false</organismsDiffer>
    <experiments>3</experiments>
</comment>
<comment type="interaction">
    <interactant intactId="EBI-750641">
        <id>Q5TD97</id>
    </interactant>
    <interactant intactId="EBI-14493093">
        <id>Q3KP44</id>
        <label>ANKRD55</label>
    </interactant>
    <organismsDiffer>false</organismsDiffer>
    <experiments>3</experiments>
</comment>
<comment type="interaction">
    <interactant intactId="EBI-750641">
        <id>Q5TD97</id>
    </interactant>
    <interactant intactId="EBI-11954519">
        <id>Q49AR9</id>
        <label>ANKS1A</label>
    </interactant>
    <organismsDiffer>false</organismsDiffer>
    <experiments>3</experiments>
</comment>
<comment type="interaction">
    <interactant intactId="EBI-750641">
        <id>Q5TD97</id>
    </interactant>
    <interactant intactId="EBI-745689">
        <id>Q7L5A3</id>
        <label>ATOSB</label>
    </interactant>
    <organismsDiffer>false</organismsDiffer>
    <experiments>5</experiments>
</comment>
<comment type="interaction">
    <interactant intactId="EBI-750641">
        <id>Q5TD97</id>
    </interactant>
    <interactant intactId="EBI-11524452">
        <id>Q8N9N5-2</id>
        <label>BANP</label>
    </interactant>
    <organismsDiffer>false</organismsDiffer>
    <experiments>3</experiments>
</comment>
<comment type="interaction">
    <interactant intactId="EBI-750641">
        <id>Q5TD97</id>
    </interactant>
    <interactant intactId="EBI-16429296">
        <id>Q8N9N5-7</id>
        <label>BANP</label>
    </interactant>
    <organismsDiffer>false</organismsDiffer>
    <experiments>3</experiments>
</comment>
<comment type="interaction">
    <interactant intactId="EBI-750641">
        <id>Q5TD97</id>
    </interactant>
    <interactant intactId="EBI-17289784">
        <id>Q96PG8</id>
        <label>BBC3</label>
    </interactant>
    <organismsDiffer>false</organismsDiffer>
    <experiments>3</experiments>
</comment>
<comment type="interaction">
    <interactant intactId="EBI-750641">
        <id>Q5TD97</id>
    </interactant>
    <interactant intactId="EBI-10174813">
        <id>A8KA13</id>
        <label>BCL6B</label>
    </interactant>
    <organismsDiffer>false</organismsDiffer>
    <experiments>3</experiments>
</comment>
<comment type="interaction">
    <interactant intactId="EBI-750641">
        <id>Q5TD97</id>
    </interactant>
    <interactant intactId="EBI-744545">
        <id>Q8NEC5</id>
        <label>CATSPER1</label>
    </interactant>
    <organismsDiffer>false</organismsDiffer>
    <experiments>3</experiments>
</comment>
<comment type="interaction">
    <interactant intactId="EBI-750641">
        <id>Q5TD97</id>
    </interactant>
    <interactant intactId="EBI-11983537">
        <id>Q86Y33-5</id>
        <label>CDC20B</label>
    </interactant>
    <organismsDiffer>false</organismsDiffer>
    <experiments>3</experiments>
</comment>
<comment type="interaction">
    <interactant intactId="EBI-750641">
        <id>Q5TD97</id>
    </interactant>
    <interactant intactId="EBI-9038570">
        <id>P27918</id>
        <label>CFP</label>
    </interactant>
    <organismsDiffer>false</organismsDiffer>
    <experiments>3</experiments>
</comment>
<comment type="interaction">
    <interactant intactId="EBI-750641">
        <id>Q5TD97</id>
    </interactant>
    <interactant intactId="EBI-741032">
        <id>Q8NE01</id>
        <label>CNNM3</label>
    </interactant>
    <organismsDiffer>false</organismsDiffer>
    <experiments>3</experiments>
</comment>
<comment type="interaction">
    <interactant intactId="EBI-750641">
        <id>Q5TD97</id>
    </interactant>
    <interactant intactId="EBI-21553822">
        <id>Q96A83-2</id>
        <label>COL26A1</label>
    </interactant>
    <organismsDiffer>false</organismsDiffer>
    <experiments>3</experiments>
</comment>
<comment type="interaction">
    <interactant intactId="EBI-750641">
        <id>Q5TD97</id>
    </interactant>
    <interactant intactId="EBI-750444">
        <id>P53672</id>
        <label>CRYBA2</label>
    </interactant>
    <organismsDiffer>false</organismsDiffer>
    <experiments>3</experiments>
</comment>
<comment type="interaction">
    <interactant intactId="EBI-750641">
        <id>Q5TD97</id>
    </interactant>
    <interactant intactId="EBI-7519711">
        <id>P53673</id>
        <label>CRYBA4</label>
    </interactant>
    <organismsDiffer>false</organismsDiffer>
    <experiments>3</experiments>
</comment>
<comment type="interaction">
    <interactant intactId="EBI-750641">
        <id>Q5TD97</id>
    </interactant>
    <interactant intactId="EBI-8636823">
        <id>Q9UBR2</id>
        <label>CTSZ</label>
    </interactant>
    <organismsDiffer>false</organismsDiffer>
    <experiments>3</experiments>
</comment>
<comment type="interaction">
    <interactant intactId="EBI-750641">
        <id>Q5TD97</id>
    </interactant>
    <interactant intactId="EBI-10173222">
        <id>A2VCK2</id>
        <label>DCDC2B</label>
    </interactant>
    <organismsDiffer>false</organismsDiffer>
    <experiments>3</experiments>
</comment>
<comment type="interaction">
    <interactant intactId="EBI-750641">
        <id>Q5TD97</id>
    </interactant>
    <interactant intactId="EBI-12000556">
        <id>Q9Y2H0-1</id>
        <label>DLGAP4</label>
    </interactant>
    <organismsDiffer>false</organismsDiffer>
    <experiments>3</experiments>
</comment>
<comment type="interaction">
    <interactant intactId="EBI-750641">
        <id>Q5TD97</id>
    </interactant>
    <interactant intactId="EBI-9679045">
        <id>Q9NQL9</id>
        <label>DMRT3</label>
    </interactant>
    <organismsDiffer>false</organismsDiffer>
    <experiments>3</experiments>
</comment>
<comment type="interaction">
    <interactant intactId="EBI-750641">
        <id>Q5TD97</id>
    </interactant>
    <interactant intactId="EBI-10976677">
        <id>G5E9A7</id>
        <label>DMWD</label>
    </interactant>
    <organismsDiffer>false</organismsDiffer>
    <experiments>3</experiments>
</comment>
<comment type="interaction">
    <interactant intactId="EBI-750641">
        <id>Q5TD97</id>
    </interactant>
    <interactant intactId="EBI-742362">
        <id>O96015</id>
        <label>DNAL4</label>
    </interactant>
    <organismsDiffer>false</organismsDiffer>
    <experiments>10</experiments>
</comment>
<comment type="interaction">
    <interactant intactId="EBI-750641">
        <id>Q5TD97</id>
    </interactant>
    <interactant intactId="EBI-740376">
        <id>Q86UW9</id>
        <label>DTX2</label>
    </interactant>
    <organismsDiffer>false</organismsDiffer>
    <experiments>3</experiments>
</comment>
<comment type="interaction">
    <interactant intactId="EBI-750641">
        <id>Q5TD97</id>
    </interactant>
    <interactant intactId="EBI-2513774">
        <id>O95363</id>
        <label>FARS2</label>
    </interactant>
    <organismsDiffer>false</organismsDiffer>
    <experiments>3</experiments>
</comment>
<comment type="interaction">
    <interactant intactId="EBI-750641">
        <id>Q5TD97</id>
    </interactant>
    <interactant intactId="EBI-11988727">
        <id>A0PJY2</id>
        <label>FEZF1</label>
    </interactant>
    <organismsDiffer>false</organismsDiffer>
    <experiments>3</experiments>
</comment>
<comment type="interaction">
    <interactant intactId="EBI-750641">
        <id>Q5TD97</id>
    </interactant>
    <interactant intactId="EBI-752049">
        <id>Q8NEG0</id>
        <label>GARIN6</label>
    </interactant>
    <organismsDiffer>false</organismsDiffer>
    <experiments>5</experiments>
</comment>
<comment type="interaction">
    <interactant intactId="EBI-750641">
        <id>Q5TD97</id>
    </interactant>
    <interactant intactId="EBI-713355">
        <id>Q13227</id>
        <label>GPS2</label>
    </interactant>
    <organismsDiffer>false</organismsDiffer>
    <experiments>3</experiments>
</comment>
<comment type="interaction">
    <interactant intactId="EBI-750641">
        <id>Q5TD97</id>
    </interactant>
    <interactant intactId="EBI-353467">
        <id>P09211</id>
        <label>GSTP1</label>
    </interactant>
    <organismsDiffer>false</organismsDiffer>
    <experiments>3</experiments>
</comment>
<comment type="interaction">
    <interactant intactId="EBI-750641">
        <id>Q5TD97</id>
    </interactant>
    <interactant intactId="EBI-11956675">
        <id>Q9GZV7</id>
        <label>HAPLN2</label>
    </interactant>
    <organismsDiffer>false</organismsDiffer>
    <experiments>3</experiments>
</comment>
<comment type="interaction">
    <interactant intactId="EBI-750641">
        <id>Q5TD97</id>
    </interactant>
    <interactant intactId="EBI-9834454">
        <id>P08631-2</id>
        <label>HCK</label>
    </interactant>
    <organismsDiffer>false</organismsDiffer>
    <experiments>3</experiments>
</comment>
<comment type="interaction">
    <interactant intactId="EBI-750641">
        <id>Q5TD97</id>
    </interactant>
    <interactant intactId="EBI-1052734">
        <id>Q7Z353</id>
        <label>HDX</label>
    </interactant>
    <organismsDiffer>false</organismsDiffer>
    <experiments>3</experiments>
</comment>
<comment type="interaction">
    <interactant intactId="EBI-750641">
        <id>Q5TD97</id>
    </interactant>
    <interactant intactId="EBI-750630">
        <id>Q9UBP5</id>
        <label>HEY2</label>
    </interactant>
    <organismsDiffer>false</organismsDiffer>
    <experiments>3</experiments>
</comment>
<comment type="interaction">
    <interactant intactId="EBI-750641">
        <id>Q5TD97</id>
    </interactant>
    <interactant intactId="EBI-740785">
        <id>P49639</id>
        <label>HOXA1</label>
    </interactant>
    <organismsDiffer>false</organismsDiffer>
    <experiments>3</experiments>
</comment>
<comment type="interaction">
    <interactant intactId="EBI-750641">
        <id>Q5TD97</id>
    </interactant>
    <interactant intactId="EBI-745290">
        <id>P17482</id>
        <label>HOXB9</label>
    </interactant>
    <organismsDiffer>false</organismsDiffer>
    <experiments>3</experiments>
</comment>
<comment type="interaction">
    <interactant intactId="EBI-750641">
        <id>Q5TD97</id>
    </interactant>
    <interactant intactId="EBI-17178971">
        <id>Q14005-2</id>
        <label>IL16</label>
    </interactant>
    <organismsDiffer>false</organismsDiffer>
    <experiments>5</experiments>
</comment>
<comment type="interaction">
    <interactant intactId="EBI-750641">
        <id>Q5TD97</id>
    </interactant>
    <interactant intactId="EBI-10990676">
        <id>Q96PC2</id>
        <label>IP6K3</label>
    </interactant>
    <organismsDiffer>false</organismsDiffer>
    <experiments>3</experiments>
</comment>
<comment type="interaction">
    <interactant intactId="EBI-750641">
        <id>Q5TD97</id>
    </interactant>
    <interactant intactId="EBI-10294579">
        <id>Q99706</id>
        <label>KIR2DL4</label>
    </interactant>
    <organismsDiffer>false</organismsDiffer>
    <experiments>3</experiments>
</comment>
<comment type="interaction">
    <interactant intactId="EBI-750641">
        <id>Q5TD97</id>
    </interactant>
    <interactant intactId="EBI-948266">
        <id>O14901</id>
        <label>KLF11</label>
    </interactant>
    <organismsDiffer>false</organismsDiffer>
    <experiments>3</experiments>
</comment>
<comment type="interaction">
    <interactant intactId="EBI-750641">
        <id>Q5TD97</id>
    </interactant>
    <interactant intactId="EBI-11959475">
        <id>P25791-3</id>
        <label>LMO2</label>
    </interactant>
    <organismsDiffer>false</organismsDiffer>
    <experiments>3</experiments>
</comment>
<comment type="interaction">
    <interactant intactId="EBI-750641">
        <id>Q5TD97</id>
    </interactant>
    <interactant intactId="EBI-721408">
        <id>Q15345</id>
        <label>LRRC41</label>
    </interactant>
    <organismsDiffer>false</organismsDiffer>
    <experiments>3</experiments>
</comment>
<comment type="interaction">
    <interactant intactId="EBI-750641">
        <id>Q5TD97</id>
    </interactant>
    <interactant intactId="EBI-746778">
        <id>Q96A72</id>
        <label>MAGOHB</label>
    </interactant>
    <organismsDiffer>false</organismsDiffer>
    <experiments>3</experiments>
</comment>
<comment type="interaction">
    <interactant intactId="EBI-750641">
        <id>Q5TD97</id>
    </interactant>
    <interactant intactId="EBI-2555085">
        <id>Q8IVT2</id>
        <label>MISP</label>
    </interactant>
    <organismsDiffer>false</organismsDiffer>
    <experiments>3</experiments>
</comment>
<comment type="interaction">
    <interactant intactId="EBI-750641">
        <id>Q5TD97</id>
    </interactant>
    <interactant intactId="EBI-5662487">
        <id>Q8TDC0</id>
        <label>MYOZ3</label>
    </interactant>
    <organismsDiffer>false</organismsDiffer>
    <experiments>3</experiments>
</comment>
<comment type="interaction">
    <interactant intactId="EBI-750641">
        <id>Q5TD97</id>
    </interactant>
    <interactant intactId="EBI-11750983">
        <id>Q9HC98-4</id>
        <label>NEK6</label>
    </interactant>
    <organismsDiffer>false</organismsDiffer>
    <experiments>3</experiments>
</comment>
<comment type="interaction">
    <interactant intactId="EBI-750641">
        <id>Q5TD97</id>
    </interactant>
    <interactant intactId="EBI-748927">
        <id>Q9NQX5</id>
        <label>NPDC1</label>
    </interactant>
    <organismsDiffer>false</organismsDiffer>
    <experiments>5</experiments>
</comment>
<comment type="interaction">
    <interactant intactId="EBI-750641">
        <id>Q5TD97</id>
    </interactant>
    <interactant intactId="EBI-1210753">
        <id>Q7Z417</id>
        <label>NUFIP2</label>
    </interactant>
    <organismsDiffer>false</organismsDiffer>
    <experiments>3</experiments>
</comment>
<comment type="interaction">
    <interactant intactId="EBI-750641">
        <id>Q5TD97</id>
    </interactant>
    <interactant intactId="EBI-740446">
        <id>P32242</id>
        <label>OTX1</label>
    </interactant>
    <organismsDiffer>false</organismsDiffer>
    <experiments>3</experiments>
</comment>
<comment type="interaction">
    <interactant intactId="EBI-750641">
        <id>Q5TD97</id>
    </interactant>
    <interactant intactId="EBI-714158">
        <id>Q13526</id>
        <label>PIN1</label>
    </interactant>
    <organismsDiffer>false</organismsDiffer>
    <experiments>3</experiments>
</comment>
<comment type="interaction">
    <interactant intactId="EBI-750641">
        <id>Q5TD97</id>
    </interactant>
    <interactant intactId="EBI-4401947">
        <id>Q9HB19</id>
        <label>PLEKHA2</label>
    </interactant>
    <organismsDiffer>false</organismsDiffer>
    <experiments>3</experiments>
</comment>
<comment type="interaction">
    <interactant intactId="EBI-750641">
        <id>Q5TD97</id>
    </interactant>
    <interactant intactId="EBI-12014286">
        <id>Q494U1-3</id>
        <label>PLEKHN1</label>
    </interactant>
    <organismsDiffer>false</organismsDiffer>
    <experiments>3</experiments>
</comment>
<comment type="interaction">
    <interactant intactId="EBI-750641">
        <id>Q5TD97</id>
    </interactant>
    <interactant intactId="EBI-2557469">
        <id>Q6NYC8</id>
        <label>PPP1R18</label>
    </interactant>
    <organismsDiffer>false</organismsDiffer>
    <experiments>3</experiments>
</comment>
<comment type="interaction">
    <interactant intactId="EBI-750641">
        <id>Q5TD97</id>
    </interactant>
    <interactant intactId="EBI-2798044">
        <id>Q2TAL8</id>
        <label>QRICH1</label>
    </interactant>
    <organismsDiffer>false</organismsDiffer>
    <experiments>3</experiments>
</comment>
<comment type="interaction">
    <interactant intactId="EBI-750641">
        <id>Q5TD97</id>
    </interactant>
    <interactant intactId="EBI-958239">
        <id>Q9ULW5</id>
        <label>RAB26</label>
    </interactant>
    <organismsDiffer>false</organismsDiffer>
    <experiments>3</experiments>
</comment>
<comment type="interaction">
    <interactant intactId="EBI-750641">
        <id>Q5TD97</id>
    </interactant>
    <interactant intactId="EBI-743796">
        <id>Q8TBN0</id>
        <label>RAB3IL1</label>
    </interactant>
    <organismsDiffer>false</organismsDiffer>
    <experiments>3</experiments>
</comment>
<comment type="interaction">
    <interactant intactId="EBI-750641">
        <id>Q5TD97</id>
    </interactant>
    <interactant intactId="EBI-714051">
        <id>P63220</id>
        <label>RPS21</label>
    </interactant>
    <organismsDiffer>false</organismsDiffer>
    <experiments>3</experiments>
</comment>
<comment type="interaction">
    <interactant intactId="EBI-750641">
        <id>Q5TD97</id>
    </interactant>
    <interactant intactId="EBI-3957636">
        <id>Q8IYX7</id>
        <label>SAXO1</label>
    </interactant>
    <organismsDiffer>false</organismsDiffer>
    <experiments>3</experiments>
</comment>
<comment type="interaction">
    <interactant intactId="EBI-750641">
        <id>Q5TD97</id>
    </interactant>
    <interactant intactId="EBI-12000762">
        <id>Q7Z5V6-2</id>
        <label>SAXO4</label>
    </interactant>
    <organismsDiffer>false</organismsDiffer>
    <experiments>3</experiments>
</comment>
<comment type="interaction">
    <interactant intactId="EBI-750641">
        <id>Q5TD97</id>
    </interactant>
    <interactant intactId="EBI-748391">
        <id>Q9BWG6</id>
        <label>SCNM1</label>
    </interactant>
    <organismsDiffer>false</organismsDiffer>
    <experiments>7</experiments>
</comment>
<comment type="interaction">
    <interactant intactId="EBI-750641">
        <id>Q5TD97</id>
    </interactant>
    <interactant intactId="EBI-727004">
        <id>O00560</id>
        <label>SDCBP</label>
    </interactant>
    <organismsDiffer>false</organismsDiffer>
    <experiments>3</experiments>
</comment>
<comment type="interaction">
    <interactant intactId="EBI-750641">
        <id>Q5TD97</id>
    </interactant>
    <interactant intactId="EBI-17482477">
        <id>O94979-2</id>
        <label>SEC31A</label>
    </interactant>
    <organismsDiffer>false</organismsDiffer>
    <experiments>3</experiments>
</comment>
<comment type="interaction">
    <interactant intactId="EBI-750641">
        <id>Q5TD97</id>
    </interactant>
    <interactant intactId="EBI-11955083">
        <id>Q9NUL5-4</id>
        <label>SHFL</label>
    </interactant>
    <organismsDiffer>false</organismsDiffer>
    <experiments>3</experiments>
</comment>
<comment type="interaction">
    <interactant intactId="EBI-750641">
        <id>Q5TD97</id>
    </interactant>
    <interactant intactId="EBI-947791">
        <id>O75093</id>
        <label>SLIT1</label>
    </interactant>
    <organismsDiffer>false</organismsDiffer>
    <experiments>3</experiments>
</comment>
<comment type="interaction">
    <interactant intactId="EBI-750641">
        <id>Q5TD97</id>
    </interactant>
    <interactant intactId="EBI-5235340">
        <id>Q7Z699</id>
        <label>SPRED1</label>
    </interactant>
    <organismsDiffer>false</organismsDiffer>
    <experiments>3</experiments>
</comment>
<comment type="interaction">
    <interactant intactId="EBI-750641">
        <id>Q5TD97</id>
    </interactant>
    <interactant intactId="EBI-3866665">
        <id>O43609</id>
        <label>SPRY1</label>
    </interactant>
    <organismsDiffer>false</organismsDiffer>
    <experiments>5</experiments>
</comment>
<comment type="interaction">
    <interactant intactId="EBI-750641">
        <id>Q5TD97</id>
    </interactant>
    <interactant intactId="EBI-1052725">
        <id>O75896</id>
        <label>TUSC2</label>
    </interactant>
    <organismsDiffer>false</organismsDiffer>
    <experiments>3</experiments>
</comment>
<comment type="interaction">
    <interactant intactId="EBI-750641">
        <id>Q5TD97</id>
    </interactant>
    <interactant intactId="EBI-2932492">
        <id>Q99757</id>
        <label>TXN2</label>
    </interactant>
    <organismsDiffer>false</organismsDiffer>
    <experiments>3</experiments>
</comment>
<comment type="interaction">
    <interactant intactId="EBI-750641">
        <id>Q5TD97</id>
    </interactant>
    <interactant intactId="EBI-711925">
        <id>Q05516</id>
        <label>ZBTB16</label>
    </interactant>
    <organismsDiffer>false</organismsDiffer>
    <experiments>3</experiments>
</comment>
<comment type="interaction">
    <interactant intactId="EBI-750641">
        <id>Q5TD97</id>
    </interactant>
    <interactant intactId="EBI-2555767">
        <id>Q15973</id>
        <label>ZNF124</label>
    </interactant>
    <organismsDiffer>false</organismsDiffer>
    <experiments>3</experiments>
</comment>
<comment type="interaction">
    <interactant intactId="EBI-750641">
        <id>Q5TD97</id>
    </interactant>
    <interactant intactId="EBI-10213055">
        <id>P52739-2</id>
        <label>ZNF131</label>
    </interactant>
    <organismsDiffer>false</organismsDiffer>
    <experiments>4</experiments>
</comment>
<comment type="interaction">
    <interactant intactId="EBI-750641">
        <id>Q5TD97</id>
    </interactant>
    <interactant intactId="EBI-5657766">
        <id>P17027</id>
        <label>ZNF23</label>
    </interactant>
    <organismsDiffer>false</organismsDiffer>
    <experiments>3</experiments>
</comment>
<comment type="interaction">
    <interactant intactId="EBI-750641">
        <id>Q5TD97</id>
    </interactant>
    <interactant intactId="EBI-10177272">
        <id>P15622-3</id>
        <label>ZNF250</label>
    </interactant>
    <organismsDiffer>false</organismsDiffer>
    <experiments>5</experiments>
</comment>
<comment type="interaction">
    <interactant intactId="EBI-750641">
        <id>Q5TD97</id>
    </interactant>
    <interactant intactId="EBI-7254491">
        <id>Q9BRH9</id>
        <label>ZNF251</label>
    </interactant>
    <organismsDiffer>false</organismsDiffer>
    <experiments>3</experiments>
</comment>
<comment type="interaction">
    <interactant intactId="EBI-750641">
        <id>Q5TD97</id>
    </interactant>
    <interactant intactId="EBI-347633">
        <id>Q9H9D4</id>
        <label>ZNF408</label>
    </interactant>
    <organismsDiffer>false</organismsDiffer>
    <experiments>3</experiments>
</comment>
<comment type="interaction">
    <interactant intactId="EBI-750641">
        <id>Q5TD97</id>
    </interactant>
    <interactant intactId="EBI-740727">
        <id>Q8TAU3</id>
        <label>ZNF417</label>
    </interactant>
    <organismsDiffer>false</organismsDiffer>
    <experiments>3</experiments>
</comment>
<comment type="interaction">
    <interactant intactId="EBI-750641">
        <id>Q5TD97</id>
    </interactant>
    <interactant intactId="EBI-726439">
        <id>Q8IYI8</id>
        <label>ZNF440</label>
    </interactant>
    <organismsDiffer>false</organismsDiffer>
    <experiments>3</experiments>
</comment>
<comment type="interaction">
    <interactant intactId="EBI-750641">
        <id>Q5TD97</id>
    </interactant>
    <interactant intactId="EBI-10273713">
        <id>Q8TBZ8</id>
        <label>ZNF564</label>
    </interactant>
    <organismsDiffer>false</organismsDiffer>
    <experiments>3</experiments>
</comment>
<comment type="interaction">
    <interactant intactId="EBI-750641">
        <id>Q5TD97</id>
    </interactant>
    <interactant intactId="EBI-745520">
        <id>Q9P0T4</id>
        <label>ZNF581</label>
    </interactant>
    <organismsDiffer>false</organismsDiffer>
    <experiments>3</experiments>
</comment>
<comment type="interaction">
    <interactant intactId="EBI-750641">
        <id>Q5TD97</id>
    </interactant>
    <interactant intactId="EBI-6427977">
        <id>Q96SQ5</id>
        <label>ZNF587</label>
    </interactant>
    <organismsDiffer>false</organismsDiffer>
    <experiments>3</experiments>
</comment>
<comment type="interaction">
    <interactant intactId="EBI-750641">
        <id>Q5TD97</id>
    </interactant>
    <interactant intactId="EBI-12062855">
        <id>Q6PF04</id>
        <label>ZNF613</label>
    </interactant>
    <organismsDiffer>false</organismsDiffer>
    <experiments>3</experiments>
</comment>
<comment type="interaction">
    <interactant intactId="EBI-750641">
        <id>Q5TD97</id>
    </interactant>
    <interactant intactId="EBI-16429014">
        <id>A0A0S2Z5X4</id>
        <label>ZNF688</label>
    </interactant>
    <organismsDiffer>false</organismsDiffer>
    <experiments>3</experiments>
</comment>
<comment type="interaction">
    <interactant intactId="EBI-750641">
        <id>Q5TD97</id>
    </interactant>
    <interactant intactId="EBI-16429989">
        <id>A0A0S2Z6P0</id>
        <label>ZNF688</label>
    </interactant>
    <organismsDiffer>false</organismsDiffer>
    <experiments>3</experiments>
</comment>
<comment type="interaction">
    <interactant intactId="EBI-750641">
        <id>Q5TD97</id>
    </interactant>
    <interactant intactId="EBI-745775">
        <id>Q96H86</id>
        <label>ZNF764</label>
    </interactant>
    <organismsDiffer>false</organismsDiffer>
    <experiments>3</experiments>
</comment>
<comment type="interaction">
    <interactant intactId="EBI-750641">
        <id>Q5TD97</id>
    </interactant>
    <interactant intactId="EBI-2686489">
        <id>Q5HY98</id>
        <label>ZNF766</label>
    </interactant>
    <organismsDiffer>false</organismsDiffer>
    <experiments>3</experiments>
</comment>
<comment type="interaction">
    <interactant intactId="EBI-750641">
        <id>Q5TD97</id>
    </interactant>
    <interactant intactId="EBI-10240849">
        <id>Q3KQV3</id>
        <label>ZNF792</label>
    </interactant>
    <organismsDiffer>false</organismsDiffer>
    <experiments>3</experiments>
</comment>
<comment type="interaction">
    <interactant intactId="EBI-750641">
        <id>Q5TD97</id>
    </interactant>
    <interactant intactId="EBI-347522">
        <id>O43257</id>
        <label>ZNHIT1</label>
    </interactant>
    <organismsDiffer>false</organismsDiffer>
    <experiments>3</experiments>
</comment>
<comment type="interaction">
    <interactant intactId="EBI-750641">
        <id>Q5TD97</id>
    </interactant>
    <interactant intactId="EBI-3957603">
        <id>P09022</id>
        <label>Hoxa1</label>
    </interactant>
    <organismsDiffer>true</organismsDiffer>
    <experiments>3</experiments>
</comment>
<comment type="subcellular location">
    <subcellularLocation>
        <location evidence="4">Nucleus</location>
    </subcellularLocation>
    <text>Nuclei of round and elongated spermatids.</text>
</comment>
<comment type="tissue specificity">
    <text evidence="4">Testis-specific (at protein level).</text>
</comment>
<sequence>MTTAHFYCQYCTASLLGKKYVLKDDSPYCVTCYDRVFSNYCEECKKPIESDSKDLCYKDRHWHEGCFKCTKCNHSLVEKPFAAKDERLLCTECYSNECSSKCFHCKRTIMPGSRKMEFKGNYWHETCFVCENCRQPIGTKPLISKESGNYCVPCFEKEFAHYCNFCKKVITSGGITFCDQLWHKECFLCSGCRKDLCEEQFMSRDDYPFCVDCYNHLYANKCVACSKPISGLTGAKFICFQDSQWHSECFNCGKCSVSLVGKGFLTQNKEIFCQKCGSGMDTDI</sequence>
<reference key="1">
    <citation type="journal article" date="2001" name="Biochem. Biophys. Res. Commun.">
        <title>Cloning and expression of activator of CREM in testis in human testicular tissue.</title>
        <authorList>
            <person name="Palermo I."/>
            <person name="Litrico L."/>
            <person name="Emmanuele G."/>
            <person name="Giuffrida V."/>
            <person name="Sassone-Corsi P."/>
            <person name="De Cesare D."/>
            <person name="Maria Fimia G."/>
            <person name="D'Agata R."/>
            <person name="Calogero A.E."/>
            <person name="Travali S."/>
        </authorList>
    </citation>
    <scope>NUCLEOTIDE SEQUENCE [MRNA]</scope>
    <scope>VARIANT MET-211</scope>
    <scope>FUNCTION</scope>
    <scope>SUBCELLULAR LOCATION</scope>
    <scope>TISSUE SPECIFICITY</scope>
    <source>
        <tissue>Testis</tissue>
    </source>
</reference>
<reference key="2">
    <citation type="journal article" date="2004" name="Nat. Genet.">
        <title>Complete sequencing and characterization of 21,243 full-length human cDNAs.</title>
        <authorList>
            <person name="Ota T."/>
            <person name="Suzuki Y."/>
            <person name="Nishikawa T."/>
            <person name="Otsuki T."/>
            <person name="Sugiyama T."/>
            <person name="Irie R."/>
            <person name="Wakamatsu A."/>
            <person name="Hayashi K."/>
            <person name="Sato H."/>
            <person name="Nagai K."/>
            <person name="Kimura K."/>
            <person name="Makita H."/>
            <person name="Sekine M."/>
            <person name="Obayashi M."/>
            <person name="Nishi T."/>
            <person name="Shibahara T."/>
            <person name="Tanaka T."/>
            <person name="Ishii S."/>
            <person name="Yamamoto J."/>
            <person name="Saito K."/>
            <person name="Kawai Y."/>
            <person name="Isono Y."/>
            <person name="Nakamura Y."/>
            <person name="Nagahari K."/>
            <person name="Murakami K."/>
            <person name="Yasuda T."/>
            <person name="Iwayanagi T."/>
            <person name="Wagatsuma M."/>
            <person name="Shiratori A."/>
            <person name="Sudo H."/>
            <person name="Hosoiri T."/>
            <person name="Kaku Y."/>
            <person name="Kodaira H."/>
            <person name="Kondo H."/>
            <person name="Sugawara M."/>
            <person name="Takahashi M."/>
            <person name="Kanda K."/>
            <person name="Yokoi T."/>
            <person name="Furuya T."/>
            <person name="Kikkawa E."/>
            <person name="Omura Y."/>
            <person name="Abe K."/>
            <person name="Kamihara K."/>
            <person name="Katsuta N."/>
            <person name="Sato K."/>
            <person name="Tanikawa M."/>
            <person name="Yamazaki M."/>
            <person name="Ninomiya K."/>
            <person name="Ishibashi T."/>
            <person name="Yamashita H."/>
            <person name="Murakawa K."/>
            <person name="Fujimori K."/>
            <person name="Tanai H."/>
            <person name="Kimata M."/>
            <person name="Watanabe M."/>
            <person name="Hiraoka S."/>
            <person name="Chiba Y."/>
            <person name="Ishida S."/>
            <person name="Ono Y."/>
            <person name="Takiguchi S."/>
            <person name="Watanabe S."/>
            <person name="Yosida M."/>
            <person name="Hotuta T."/>
            <person name="Kusano J."/>
            <person name="Kanehori K."/>
            <person name="Takahashi-Fujii A."/>
            <person name="Hara H."/>
            <person name="Tanase T.-O."/>
            <person name="Nomura Y."/>
            <person name="Togiya S."/>
            <person name="Komai F."/>
            <person name="Hara R."/>
            <person name="Takeuchi K."/>
            <person name="Arita M."/>
            <person name="Imose N."/>
            <person name="Musashino K."/>
            <person name="Yuuki H."/>
            <person name="Oshima A."/>
            <person name="Sasaki N."/>
            <person name="Aotsuka S."/>
            <person name="Yoshikawa Y."/>
            <person name="Matsunawa H."/>
            <person name="Ichihara T."/>
            <person name="Shiohata N."/>
            <person name="Sano S."/>
            <person name="Moriya S."/>
            <person name="Momiyama H."/>
            <person name="Satoh N."/>
            <person name="Takami S."/>
            <person name="Terashima Y."/>
            <person name="Suzuki O."/>
            <person name="Nakagawa S."/>
            <person name="Senoh A."/>
            <person name="Mizoguchi H."/>
            <person name="Goto Y."/>
            <person name="Shimizu F."/>
            <person name="Wakebe H."/>
            <person name="Hishigaki H."/>
            <person name="Watanabe T."/>
            <person name="Sugiyama A."/>
            <person name="Takemoto M."/>
            <person name="Kawakami B."/>
            <person name="Yamazaki M."/>
            <person name="Watanabe K."/>
            <person name="Kumagai A."/>
            <person name="Itakura S."/>
            <person name="Fukuzumi Y."/>
            <person name="Fujimori Y."/>
            <person name="Komiyama M."/>
            <person name="Tashiro H."/>
            <person name="Tanigami A."/>
            <person name="Fujiwara T."/>
            <person name="Ono T."/>
            <person name="Yamada K."/>
            <person name="Fujii Y."/>
            <person name="Ozaki K."/>
            <person name="Hirao M."/>
            <person name="Ohmori Y."/>
            <person name="Kawabata A."/>
            <person name="Hikiji T."/>
            <person name="Kobatake N."/>
            <person name="Inagaki H."/>
            <person name="Ikema Y."/>
            <person name="Okamoto S."/>
            <person name="Okitani R."/>
            <person name="Kawakami T."/>
            <person name="Noguchi S."/>
            <person name="Itoh T."/>
            <person name="Shigeta K."/>
            <person name="Senba T."/>
            <person name="Matsumura K."/>
            <person name="Nakajima Y."/>
            <person name="Mizuno T."/>
            <person name="Morinaga M."/>
            <person name="Sasaki M."/>
            <person name="Togashi T."/>
            <person name="Oyama M."/>
            <person name="Hata H."/>
            <person name="Watanabe M."/>
            <person name="Komatsu T."/>
            <person name="Mizushima-Sugano J."/>
            <person name="Satoh T."/>
            <person name="Shirai Y."/>
            <person name="Takahashi Y."/>
            <person name="Nakagawa K."/>
            <person name="Okumura K."/>
            <person name="Nagase T."/>
            <person name="Nomura N."/>
            <person name="Kikuchi H."/>
            <person name="Masuho Y."/>
            <person name="Yamashita R."/>
            <person name="Nakai K."/>
            <person name="Yada T."/>
            <person name="Nakamura Y."/>
            <person name="Ohara O."/>
            <person name="Isogai T."/>
            <person name="Sugano S."/>
        </authorList>
    </citation>
    <scope>NUCLEOTIDE SEQUENCE [LARGE SCALE MRNA]</scope>
    <scope>VARIANT MET-211</scope>
    <source>
        <tissue>Trachea</tissue>
    </source>
</reference>
<reference key="3">
    <citation type="submission" date="2005-04" db="EMBL/GenBank/DDBJ databases">
        <authorList>
            <person name="Totoki Y."/>
            <person name="Toyoda A."/>
            <person name="Takeda T."/>
            <person name="Sakaki Y."/>
            <person name="Tanaka A."/>
            <person name="Yokoyama S."/>
        </authorList>
    </citation>
    <scope>NUCLEOTIDE SEQUENCE [LARGE SCALE MRNA]</scope>
    <source>
        <tissue>Testis</tissue>
    </source>
</reference>
<reference key="4">
    <citation type="journal article" date="2003" name="Nature">
        <title>The DNA sequence and analysis of human chromosome 6.</title>
        <authorList>
            <person name="Mungall A.J."/>
            <person name="Palmer S.A."/>
            <person name="Sims S.K."/>
            <person name="Edwards C.A."/>
            <person name="Ashurst J.L."/>
            <person name="Wilming L."/>
            <person name="Jones M.C."/>
            <person name="Horton R."/>
            <person name="Hunt S.E."/>
            <person name="Scott C.E."/>
            <person name="Gilbert J.G.R."/>
            <person name="Clamp M.E."/>
            <person name="Bethel G."/>
            <person name="Milne S."/>
            <person name="Ainscough R."/>
            <person name="Almeida J.P."/>
            <person name="Ambrose K.D."/>
            <person name="Andrews T.D."/>
            <person name="Ashwell R.I.S."/>
            <person name="Babbage A.K."/>
            <person name="Bagguley C.L."/>
            <person name="Bailey J."/>
            <person name="Banerjee R."/>
            <person name="Barker D.J."/>
            <person name="Barlow K.F."/>
            <person name="Bates K."/>
            <person name="Beare D.M."/>
            <person name="Beasley H."/>
            <person name="Beasley O."/>
            <person name="Bird C.P."/>
            <person name="Blakey S.E."/>
            <person name="Bray-Allen S."/>
            <person name="Brook J."/>
            <person name="Brown A.J."/>
            <person name="Brown J.Y."/>
            <person name="Burford D.C."/>
            <person name="Burrill W."/>
            <person name="Burton J."/>
            <person name="Carder C."/>
            <person name="Carter N.P."/>
            <person name="Chapman J.C."/>
            <person name="Clark S.Y."/>
            <person name="Clark G."/>
            <person name="Clee C.M."/>
            <person name="Clegg S."/>
            <person name="Cobley V."/>
            <person name="Collier R.E."/>
            <person name="Collins J.E."/>
            <person name="Colman L.K."/>
            <person name="Corby N.R."/>
            <person name="Coville G.J."/>
            <person name="Culley K.M."/>
            <person name="Dhami P."/>
            <person name="Davies J."/>
            <person name="Dunn M."/>
            <person name="Earthrowl M.E."/>
            <person name="Ellington A.E."/>
            <person name="Evans K.A."/>
            <person name="Faulkner L."/>
            <person name="Francis M.D."/>
            <person name="Frankish A."/>
            <person name="Frankland J."/>
            <person name="French L."/>
            <person name="Garner P."/>
            <person name="Garnett J."/>
            <person name="Ghori M.J."/>
            <person name="Gilby L.M."/>
            <person name="Gillson C.J."/>
            <person name="Glithero R.J."/>
            <person name="Grafham D.V."/>
            <person name="Grant M."/>
            <person name="Gribble S."/>
            <person name="Griffiths C."/>
            <person name="Griffiths M.N.D."/>
            <person name="Hall R."/>
            <person name="Halls K.S."/>
            <person name="Hammond S."/>
            <person name="Harley J.L."/>
            <person name="Hart E.A."/>
            <person name="Heath P.D."/>
            <person name="Heathcott R."/>
            <person name="Holmes S.J."/>
            <person name="Howden P.J."/>
            <person name="Howe K.L."/>
            <person name="Howell G.R."/>
            <person name="Huckle E."/>
            <person name="Humphray S.J."/>
            <person name="Humphries M.D."/>
            <person name="Hunt A.R."/>
            <person name="Johnson C.M."/>
            <person name="Joy A.A."/>
            <person name="Kay M."/>
            <person name="Keenan S.J."/>
            <person name="Kimberley A.M."/>
            <person name="King A."/>
            <person name="Laird G.K."/>
            <person name="Langford C."/>
            <person name="Lawlor S."/>
            <person name="Leongamornlert D.A."/>
            <person name="Leversha M."/>
            <person name="Lloyd C.R."/>
            <person name="Lloyd D.M."/>
            <person name="Loveland J.E."/>
            <person name="Lovell J."/>
            <person name="Martin S."/>
            <person name="Mashreghi-Mohammadi M."/>
            <person name="Maslen G.L."/>
            <person name="Matthews L."/>
            <person name="McCann O.T."/>
            <person name="McLaren S.J."/>
            <person name="McLay K."/>
            <person name="McMurray A."/>
            <person name="Moore M.J.F."/>
            <person name="Mullikin J.C."/>
            <person name="Niblett D."/>
            <person name="Nickerson T."/>
            <person name="Novik K.L."/>
            <person name="Oliver K."/>
            <person name="Overton-Larty E.K."/>
            <person name="Parker A."/>
            <person name="Patel R."/>
            <person name="Pearce A.V."/>
            <person name="Peck A.I."/>
            <person name="Phillimore B.J.C.T."/>
            <person name="Phillips S."/>
            <person name="Plumb R.W."/>
            <person name="Porter K.M."/>
            <person name="Ramsey Y."/>
            <person name="Ranby S.A."/>
            <person name="Rice C.M."/>
            <person name="Ross M.T."/>
            <person name="Searle S.M."/>
            <person name="Sehra H.K."/>
            <person name="Sheridan E."/>
            <person name="Skuce C.D."/>
            <person name="Smith S."/>
            <person name="Smith M."/>
            <person name="Spraggon L."/>
            <person name="Squares S.L."/>
            <person name="Steward C.A."/>
            <person name="Sycamore N."/>
            <person name="Tamlyn-Hall G."/>
            <person name="Tester J."/>
            <person name="Theaker A.J."/>
            <person name="Thomas D.W."/>
            <person name="Thorpe A."/>
            <person name="Tracey A."/>
            <person name="Tromans A."/>
            <person name="Tubby B."/>
            <person name="Wall M."/>
            <person name="Wallis J.M."/>
            <person name="West A.P."/>
            <person name="White S.S."/>
            <person name="Whitehead S.L."/>
            <person name="Whittaker H."/>
            <person name="Wild A."/>
            <person name="Willey D.J."/>
            <person name="Wilmer T.E."/>
            <person name="Wood J.M."/>
            <person name="Wray P.W."/>
            <person name="Wyatt J.C."/>
            <person name="Young L."/>
            <person name="Younger R.M."/>
            <person name="Bentley D.R."/>
            <person name="Coulson A."/>
            <person name="Durbin R.M."/>
            <person name="Hubbard T."/>
            <person name="Sulston J.E."/>
            <person name="Dunham I."/>
            <person name="Rogers J."/>
            <person name="Beck S."/>
        </authorList>
    </citation>
    <scope>NUCLEOTIDE SEQUENCE [LARGE SCALE GENOMIC DNA]</scope>
</reference>
<reference key="5">
    <citation type="submission" date="2005-09" db="EMBL/GenBank/DDBJ databases">
        <authorList>
            <person name="Mural R.J."/>
            <person name="Istrail S."/>
            <person name="Sutton G.G."/>
            <person name="Florea L."/>
            <person name="Halpern A.L."/>
            <person name="Mobarry C.M."/>
            <person name="Lippert R."/>
            <person name="Walenz B."/>
            <person name="Shatkay H."/>
            <person name="Dew I."/>
            <person name="Miller J.R."/>
            <person name="Flanigan M.J."/>
            <person name="Edwards N.J."/>
            <person name="Bolanos R."/>
            <person name="Fasulo D."/>
            <person name="Halldorsson B.V."/>
            <person name="Hannenhalli S."/>
            <person name="Turner R."/>
            <person name="Yooseph S."/>
            <person name="Lu F."/>
            <person name="Nusskern D.R."/>
            <person name="Shue B.C."/>
            <person name="Zheng X.H."/>
            <person name="Zhong F."/>
            <person name="Delcher A.L."/>
            <person name="Huson D.H."/>
            <person name="Kravitz S.A."/>
            <person name="Mouchard L."/>
            <person name="Reinert K."/>
            <person name="Remington K.A."/>
            <person name="Clark A.G."/>
            <person name="Waterman M.S."/>
            <person name="Eichler E.E."/>
            <person name="Adams M.D."/>
            <person name="Hunkapiller M.W."/>
            <person name="Myers E.W."/>
            <person name="Venter J.C."/>
        </authorList>
    </citation>
    <scope>NUCLEOTIDE SEQUENCE [LARGE SCALE GENOMIC DNA]</scope>
</reference>
<reference key="6">
    <citation type="journal article" date="2004" name="Genome Res.">
        <title>The status, quality, and expansion of the NIH full-length cDNA project: the Mammalian Gene Collection (MGC).</title>
        <authorList>
            <consortium name="The MGC Project Team"/>
        </authorList>
    </citation>
    <scope>NUCLEOTIDE SEQUENCE [LARGE SCALE MRNA]</scope>
    <scope>VARIANT MET-211</scope>
    <source>
        <tissue>Testis</tissue>
    </source>
</reference>
<reference key="7">
    <citation type="submission" date="2005-11" db="PDB data bank">
        <title>Solution structures of the C-terminal LIM domain of human FHL5 protein.</title>
        <authorList>
            <consortium name="RIKEN structural genomics initiative (RSGI)"/>
        </authorList>
    </citation>
    <scope>STRUCTURE BY NMR OF 222-284 IN COMPLEX WITH ZINC IONS</scope>
</reference>
<proteinExistence type="evidence at protein level"/>
<dbReference type="EMBL" id="AF278541">
    <property type="protein sequence ID" value="AAF85978.1"/>
    <property type="molecule type" value="mRNA"/>
</dbReference>
<dbReference type="EMBL" id="AK057611">
    <property type="protein sequence ID" value="BAG51940.1"/>
    <property type="molecule type" value="mRNA"/>
</dbReference>
<dbReference type="EMBL" id="AK223539">
    <property type="protein sequence ID" value="BAD97259.1"/>
    <property type="molecule type" value="mRNA"/>
</dbReference>
<dbReference type="EMBL" id="AK314608">
    <property type="protein sequence ID" value="BAG37178.1"/>
    <property type="molecule type" value="mRNA"/>
</dbReference>
<dbReference type="EMBL" id="AL132776">
    <property type="status" value="NOT_ANNOTATED_CDS"/>
    <property type="molecule type" value="Genomic_DNA"/>
</dbReference>
<dbReference type="EMBL" id="CH471051">
    <property type="protein sequence ID" value="EAW48503.1"/>
    <property type="molecule type" value="Genomic_DNA"/>
</dbReference>
<dbReference type="EMBL" id="CH471051">
    <property type="protein sequence ID" value="EAW48504.1"/>
    <property type="molecule type" value="Genomic_DNA"/>
</dbReference>
<dbReference type="EMBL" id="CH471051">
    <property type="protein sequence ID" value="EAW48505.1"/>
    <property type="molecule type" value="Genomic_DNA"/>
</dbReference>
<dbReference type="EMBL" id="BC021723">
    <property type="protein sequence ID" value="AAH21723.1"/>
    <property type="molecule type" value="mRNA"/>
</dbReference>
<dbReference type="EMBL" id="BC029490">
    <property type="protein sequence ID" value="AAH29490.1"/>
    <property type="molecule type" value="mRNA"/>
</dbReference>
<dbReference type="CCDS" id="CCDS5035.1"/>
<dbReference type="PIR" id="JC7686">
    <property type="entry name" value="JC7686"/>
</dbReference>
<dbReference type="RefSeq" id="NP_001164278.1">
    <property type="nucleotide sequence ID" value="NM_001170807.3"/>
</dbReference>
<dbReference type="RefSeq" id="NP_001309395.1">
    <property type="nucleotide sequence ID" value="NM_001322466.2"/>
</dbReference>
<dbReference type="RefSeq" id="NP_001309396.1">
    <property type="nucleotide sequence ID" value="NM_001322467.1"/>
</dbReference>
<dbReference type="RefSeq" id="NP_065228.4">
    <property type="nucleotide sequence ID" value="NM_020482.5"/>
</dbReference>
<dbReference type="RefSeq" id="XP_047275523.1">
    <property type="nucleotide sequence ID" value="XM_047419567.1"/>
</dbReference>
<dbReference type="PDB" id="1X68">
    <property type="method" value="NMR"/>
    <property type="chains" value="A=222-284"/>
</dbReference>
<dbReference type="PDBsum" id="1X68"/>
<dbReference type="SMR" id="Q5TD97"/>
<dbReference type="BioGRID" id="114846">
    <property type="interactions" value="101"/>
</dbReference>
<dbReference type="FunCoup" id="Q5TD97">
    <property type="interactions" value="53"/>
</dbReference>
<dbReference type="IntAct" id="Q5TD97">
    <property type="interactions" value="97"/>
</dbReference>
<dbReference type="MINT" id="Q5TD97"/>
<dbReference type="STRING" id="9606.ENSP00000326022"/>
<dbReference type="iPTMnet" id="Q5TD97"/>
<dbReference type="PhosphoSitePlus" id="Q5TD97"/>
<dbReference type="BioMuta" id="FHL5"/>
<dbReference type="DMDM" id="68565455"/>
<dbReference type="MassIVE" id="Q5TD97"/>
<dbReference type="PaxDb" id="9606-ENSP00000326022"/>
<dbReference type="PeptideAtlas" id="Q5TD97"/>
<dbReference type="ProteomicsDB" id="65008"/>
<dbReference type="Antibodypedia" id="31954">
    <property type="antibodies" value="165 antibodies from 24 providers"/>
</dbReference>
<dbReference type="DNASU" id="9457"/>
<dbReference type="Ensembl" id="ENST00000326771.2">
    <property type="protein sequence ID" value="ENSP00000326022.2"/>
    <property type="gene ID" value="ENSG00000112214.11"/>
</dbReference>
<dbReference type="Ensembl" id="ENST00000450218.6">
    <property type="protein sequence ID" value="ENSP00000396390.2"/>
    <property type="gene ID" value="ENSG00000112214.11"/>
</dbReference>
<dbReference type="Ensembl" id="ENST00000541107.5">
    <property type="protein sequence ID" value="ENSP00000442357.1"/>
    <property type="gene ID" value="ENSG00000112214.11"/>
</dbReference>
<dbReference type="GeneID" id="9457"/>
<dbReference type="KEGG" id="hsa:9457"/>
<dbReference type="MANE-Select" id="ENST00000450218.6">
    <property type="protein sequence ID" value="ENSP00000396390.2"/>
    <property type="RefSeq nucleotide sequence ID" value="NM_001322466.2"/>
    <property type="RefSeq protein sequence ID" value="NP_001309395.1"/>
</dbReference>
<dbReference type="UCSC" id="uc003pos.3">
    <property type="organism name" value="human"/>
</dbReference>
<dbReference type="AGR" id="HGNC:17371"/>
<dbReference type="CTD" id="9457"/>
<dbReference type="DisGeNET" id="9457"/>
<dbReference type="GeneCards" id="FHL5"/>
<dbReference type="HGNC" id="HGNC:17371">
    <property type="gene designation" value="FHL5"/>
</dbReference>
<dbReference type="HPA" id="ENSG00000112214">
    <property type="expression patterns" value="Tissue enhanced (testis)"/>
</dbReference>
<dbReference type="MIM" id="605126">
    <property type="type" value="gene"/>
</dbReference>
<dbReference type="neXtProt" id="NX_Q5TD97"/>
<dbReference type="OpenTargets" id="ENSG00000112214"/>
<dbReference type="PharmGKB" id="PA134971720"/>
<dbReference type="VEuPathDB" id="HostDB:ENSG00000112214"/>
<dbReference type="eggNOG" id="KOG1704">
    <property type="taxonomic scope" value="Eukaryota"/>
</dbReference>
<dbReference type="GeneTree" id="ENSGT00950000183028"/>
<dbReference type="HOGENOM" id="CLU_001357_2_0_1"/>
<dbReference type="InParanoid" id="Q5TD97"/>
<dbReference type="OMA" id="ERCFNCA"/>
<dbReference type="OrthoDB" id="274660at2759"/>
<dbReference type="PAN-GO" id="Q5TD97">
    <property type="GO annotations" value="4 GO annotations based on evolutionary models"/>
</dbReference>
<dbReference type="PhylomeDB" id="Q5TD97"/>
<dbReference type="TreeFam" id="TF314113"/>
<dbReference type="PathwayCommons" id="Q5TD97"/>
<dbReference type="SignaLink" id="Q5TD97"/>
<dbReference type="SIGNOR" id="Q5TD97"/>
<dbReference type="BioGRID-ORCS" id="9457">
    <property type="hits" value="15 hits in 1145 CRISPR screens"/>
</dbReference>
<dbReference type="EvolutionaryTrace" id="Q5TD97"/>
<dbReference type="GeneWiki" id="FHL5"/>
<dbReference type="GenomeRNAi" id="9457"/>
<dbReference type="Pharos" id="Q5TD97">
    <property type="development level" value="Tbio"/>
</dbReference>
<dbReference type="PRO" id="PR:Q5TD97"/>
<dbReference type="Proteomes" id="UP000005640">
    <property type="component" value="Chromosome 6"/>
</dbReference>
<dbReference type="RNAct" id="Q5TD97">
    <property type="molecule type" value="protein"/>
</dbReference>
<dbReference type="Bgee" id="ENSG00000112214">
    <property type="expression patterns" value="Expressed in popliteal artery and 142 other cell types or tissues"/>
</dbReference>
<dbReference type="ExpressionAtlas" id="Q5TD97">
    <property type="expression patterns" value="baseline and differential"/>
</dbReference>
<dbReference type="GO" id="GO:0005634">
    <property type="term" value="C:nucleus"/>
    <property type="evidence" value="ECO:0000318"/>
    <property type="project" value="GO_Central"/>
</dbReference>
<dbReference type="GO" id="GO:0030018">
    <property type="term" value="C:Z disc"/>
    <property type="evidence" value="ECO:0000318"/>
    <property type="project" value="GO_Central"/>
</dbReference>
<dbReference type="GO" id="GO:0003713">
    <property type="term" value="F:transcription coactivator activity"/>
    <property type="evidence" value="ECO:0000318"/>
    <property type="project" value="GO_Central"/>
</dbReference>
<dbReference type="GO" id="GO:0008270">
    <property type="term" value="F:zinc ion binding"/>
    <property type="evidence" value="ECO:0007669"/>
    <property type="project" value="UniProtKB-KW"/>
</dbReference>
<dbReference type="GO" id="GO:0045944">
    <property type="term" value="P:positive regulation of transcription by RNA polymerase II"/>
    <property type="evidence" value="ECO:0000318"/>
    <property type="project" value="GO_Central"/>
</dbReference>
<dbReference type="CDD" id="cd09343">
    <property type="entry name" value="LIM1_FHL"/>
    <property type="match status" value="1"/>
</dbReference>
<dbReference type="CDD" id="cd09428">
    <property type="entry name" value="LIM2_FHL5"/>
    <property type="match status" value="1"/>
</dbReference>
<dbReference type="CDD" id="cd09346">
    <property type="entry name" value="LIM3_FHL"/>
    <property type="match status" value="1"/>
</dbReference>
<dbReference type="CDD" id="cd09347">
    <property type="entry name" value="LIM4_FHL"/>
    <property type="match status" value="1"/>
</dbReference>
<dbReference type="FunFam" id="2.10.110.10:FF:000013">
    <property type="entry name" value="Four and a half LIM domains 1"/>
    <property type="match status" value="1"/>
</dbReference>
<dbReference type="FunFam" id="2.10.110.10:FF:000030">
    <property type="entry name" value="Four and a half LIM domains protein 2"/>
    <property type="match status" value="1"/>
</dbReference>
<dbReference type="FunFam" id="2.10.110.10:FF:000048">
    <property type="entry name" value="Four and a half LIM domains protein 2"/>
    <property type="match status" value="1"/>
</dbReference>
<dbReference type="FunFam" id="2.10.110.10:FF:000049">
    <property type="entry name" value="Four and a half LIM domains protein 2"/>
    <property type="match status" value="1"/>
</dbReference>
<dbReference type="Gene3D" id="2.10.110.10">
    <property type="entry name" value="Cysteine Rich Protein"/>
    <property type="match status" value="5"/>
</dbReference>
<dbReference type="InterPro" id="IPR042947">
    <property type="entry name" value="FHL5_LIM2"/>
</dbReference>
<dbReference type="InterPro" id="IPR056807">
    <property type="entry name" value="LIM_FHL1/2/3/5_N"/>
</dbReference>
<dbReference type="InterPro" id="IPR001781">
    <property type="entry name" value="Znf_LIM"/>
</dbReference>
<dbReference type="PANTHER" id="PTHR24205">
    <property type="entry name" value="FOUR AND A HALF LIM DOMAINS PROTEIN"/>
    <property type="match status" value="1"/>
</dbReference>
<dbReference type="PANTHER" id="PTHR24205:SF7">
    <property type="entry name" value="FOUR AND A HALF LIM DOMAINS PROTEIN 5"/>
    <property type="match status" value="1"/>
</dbReference>
<dbReference type="Pfam" id="PF00412">
    <property type="entry name" value="LIM"/>
    <property type="match status" value="4"/>
</dbReference>
<dbReference type="Pfam" id="PF25076">
    <property type="entry name" value="LIM_FHL2-3_N"/>
    <property type="match status" value="1"/>
</dbReference>
<dbReference type="SMART" id="SM00132">
    <property type="entry name" value="LIM"/>
    <property type="match status" value="4"/>
</dbReference>
<dbReference type="SUPFAM" id="SSF57716">
    <property type="entry name" value="Glucocorticoid receptor-like (DNA-binding domain)"/>
    <property type="match status" value="5"/>
</dbReference>
<dbReference type="PROSITE" id="PS00478">
    <property type="entry name" value="LIM_DOMAIN_1"/>
    <property type="match status" value="4"/>
</dbReference>
<dbReference type="PROSITE" id="PS50023">
    <property type="entry name" value="LIM_DOMAIN_2"/>
    <property type="match status" value="4"/>
</dbReference>
<feature type="chain" id="PRO_0000075742" description="Four and a half LIM domains protein 5">
    <location>
        <begin position="1"/>
        <end position="284"/>
    </location>
</feature>
<feature type="domain" description="LIM zinc-binding 1" evidence="3">
    <location>
        <begin position="39"/>
        <end position="100"/>
    </location>
</feature>
<feature type="domain" description="LIM zinc-binding 2" evidence="3">
    <location>
        <begin position="101"/>
        <end position="160"/>
    </location>
</feature>
<feature type="domain" description="LIM zinc-binding 3" evidence="3">
    <location>
        <begin position="161"/>
        <end position="220"/>
    </location>
</feature>
<feature type="domain" description="LIM zinc-binding 4" evidence="3">
    <location>
        <begin position="223"/>
        <end position="283"/>
    </location>
</feature>
<feature type="zinc finger region" description="C4-type" evidence="2">
    <location>
        <begin position="8"/>
        <end position="32"/>
    </location>
</feature>
<feature type="sequence variant" id="VAR_056160" description="In dbSNP:rs35157931.">
    <original>R</original>
    <variation>H</variation>
    <location>
        <position position="35"/>
    </location>
</feature>
<feature type="sequence variant" id="VAR_056161" description="In dbSNP:rs2273621.">
    <original>R</original>
    <variation>G</variation>
    <location>
        <position position="204"/>
    </location>
</feature>
<feature type="sequence variant" id="VAR_022824" description="In dbSNP:rs2252816." evidence="4 5 6">
    <original>V</original>
    <variation>M</variation>
    <location>
        <position position="211"/>
    </location>
</feature>
<feature type="sequence variant" id="VAR_056162" description="In dbSNP:rs9373985.">
    <original>S</original>
    <variation>R</variation>
    <location>
        <position position="243"/>
    </location>
</feature>
<feature type="sequence conflict" description="In Ref. 1; AAF85978." evidence="7" ref="1">
    <original>L</original>
    <variation>F</variation>
    <location>
        <position position="55"/>
    </location>
</feature>
<feature type="sequence conflict" description="In Ref. 6; AAH21723/AAH29490." evidence="7" ref="6">
    <original>G</original>
    <variation>D</variation>
    <location>
        <position position="191"/>
    </location>
</feature>
<feature type="sequence conflict" description="In Ref. 1; AAF85978." evidence="7" ref="1">
    <original>K</original>
    <variation>R</variation>
    <location>
        <position position="254"/>
    </location>
</feature>
<feature type="turn" evidence="8">
    <location>
        <begin position="223"/>
        <end position="225"/>
    </location>
</feature>
<feature type="turn" evidence="8">
    <location>
        <begin position="231"/>
        <end position="234"/>
    </location>
</feature>
<feature type="strand" evidence="8">
    <location>
        <begin position="237"/>
        <end position="240"/>
    </location>
</feature>
<feature type="strand" evidence="8">
    <location>
        <begin position="243"/>
        <end position="246"/>
    </location>
</feature>
<feature type="helix" evidence="8">
    <location>
        <begin position="247"/>
        <end position="249"/>
    </location>
</feature>
<feature type="turn" evidence="8">
    <location>
        <begin position="253"/>
        <end position="255"/>
    </location>
</feature>
<feature type="strand" evidence="8">
    <location>
        <begin position="260"/>
        <end position="262"/>
    </location>
</feature>
<feature type="strand" evidence="8">
    <location>
        <begin position="264"/>
        <end position="267"/>
    </location>
</feature>
<feature type="strand" evidence="8">
    <location>
        <begin position="270"/>
        <end position="273"/>
    </location>
</feature>
<feature type="turn" evidence="8">
    <location>
        <begin position="274"/>
        <end position="277"/>
    </location>
</feature>
<organism>
    <name type="scientific">Homo sapiens</name>
    <name type="common">Human</name>
    <dbReference type="NCBI Taxonomy" id="9606"/>
    <lineage>
        <taxon>Eukaryota</taxon>
        <taxon>Metazoa</taxon>
        <taxon>Chordata</taxon>
        <taxon>Craniata</taxon>
        <taxon>Vertebrata</taxon>
        <taxon>Euteleostomi</taxon>
        <taxon>Mammalia</taxon>
        <taxon>Eutheria</taxon>
        <taxon>Euarchontoglires</taxon>
        <taxon>Primates</taxon>
        <taxon>Haplorrhini</taxon>
        <taxon>Catarrhini</taxon>
        <taxon>Hominidae</taxon>
        <taxon>Homo</taxon>
    </lineage>
</organism>
<protein>
    <recommendedName>
        <fullName>Four and a half LIM domains protein 5</fullName>
        <shortName>FHL-5</shortName>
    </recommendedName>
    <alternativeName>
        <fullName>Activator of cAMP-responsive element modulator in testis</fullName>
        <shortName>Activator of CREM in testis</shortName>
    </alternativeName>
</protein>
<keyword id="KW-0002">3D-structure</keyword>
<keyword id="KW-0440">LIM domain</keyword>
<keyword id="KW-0479">Metal-binding</keyword>
<keyword id="KW-0539">Nucleus</keyword>
<keyword id="KW-1267">Proteomics identification</keyword>
<keyword id="KW-1185">Reference proteome</keyword>
<keyword id="KW-0677">Repeat</keyword>
<keyword id="KW-0862">Zinc</keyword>
<keyword id="KW-0863">Zinc-finger</keyword>
<evidence type="ECO:0000250" key="1">
    <source>
        <dbReference type="UniProtKB" id="Q9WTX7"/>
    </source>
</evidence>
<evidence type="ECO:0000255" key="2"/>
<evidence type="ECO:0000255" key="3">
    <source>
        <dbReference type="PROSITE-ProRule" id="PRU00125"/>
    </source>
</evidence>
<evidence type="ECO:0000269" key="4">
    <source>
    </source>
</evidence>
<evidence type="ECO:0000269" key="5">
    <source>
    </source>
</evidence>
<evidence type="ECO:0000269" key="6">
    <source>
    </source>
</evidence>
<evidence type="ECO:0000305" key="7"/>
<evidence type="ECO:0007829" key="8">
    <source>
        <dbReference type="PDB" id="1X68"/>
    </source>
</evidence>
<accession>Q5TD97</accession>
<accession>B2RBD1</accession>
<accession>E1P526</accession>
<accession>Q5TD98</accession>
<accession>Q8WW21</accession>
<accession>Q9NQU2</accession>